<sequence length="466" mass="52242">MTIRLYDTSARQIRDFTPLLPGCVSIYLCGATVQAAPHIGHIRSGLNFDIMRRWFEYRGYDVTFIRNVTDIDDKIIAKSADHGRPWWAIGYENERAFNDGYDVLGCLPPTYEPRATGHITEMVEMMRTLIERGHAYEADGNVYFDVRSFPEYLQLSNQELDNLLQPSGEGETGKRDPRDFAMWKAAKPGEPTWETPWGRGRPGWHLECSAMAHKYLGSAFDIHGGGLDLIFPHHENEIAQAKAFGDEFARYWVHNAWVTMSGEKMSKSLGNSVLVSEMVKQWRPIVLRYYLGTPHYRSMIEYSEEALREAESAFARIEGFVQRVVEKAGGVVEPSPEVPPAFAEAMDDDLGVPQALAIVHTTVRQGNSALAADDKEAAVARLAEVRAMLGVLGLDPLDPQWAGEGDRGEDLHGVVDTLVRMVLDQREAARARKDWATADAIRDQLNQSGLVIEDSPQGPRWTLGPR</sequence>
<proteinExistence type="inferred from homology"/>
<gene>
    <name evidence="1" type="primary">cysS</name>
    <name type="synonym">cysS1</name>
    <name type="ordered locus">SAV_3967</name>
</gene>
<feature type="chain" id="PRO_0000159488" description="Cysteine--tRNA ligase">
    <location>
        <begin position="1"/>
        <end position="466"/>
    </location>
</feature>
<feature type="short sequence motif" description="'HIGH' region">
    <location>
        <begin position="31"/>
        <end position="41"/>
    </location>
</feature>
<feature type="short sequence motif" description="'KMSKS' region">
    <location>
        <begin position="264"/>
        <end position="268"/>
    </location>
</feature>
<feature type="binding site" evidence="1">
    <location>
        <position position="29"/>
    </location>
    <ligand>
        <name>Zn(2+)</name>
        <dbReference type="ChEBI" id="CHEBI:29105"/>
    </ligand>
</feature>
<feature type="binding site" evidence="1">
    <location>
        <position position="208"/>
    </location>
    <ligand>
        <name>Zn(2+)</name>
        <dbReference type="ChEBI" id="CHEBI:29105"/>
    </ligand>
</feature>
<feature type="binding site" evidence="1">
    <location>
        <position position="233"/>
    </location>
    <ligand>
        <name>Zn(2+)</name>
        <dbReference type="ChEBI" id="CHEBI:29105"/>
    </ligand>
</feature>
<feature type="binding site" evidence="1">
    <location>
        <position position="237"/>
    </location>
    <ligand>
        <name>Zn(2+)</name>
        <dbReference type="ChEBI" id="CHEBI:29105"/>
    </ligand>
</feature>
<feature type="binding site" evidence="1">
    <location>
        <position position="267"/>
    </location>
    <ligand>
        <name>ATP</name>
        <dbReference type="ChEBI" id="CHEBI:30616"/>
    </ligand>
</feature>
<name>SYC_STRAW</name>
<protein>
    <recommendedName>
        <fullName evidence="1">Cysteine--tRNA ligase</fullName>
        <ecNumber evidence="1">6.1.1.16</ecNumber>
    </recommendedName>
    <alternativeName>
        <fullName evidence="1">Cysteinyl-tRNA synthetase</fullName>
        <shortName evidence="1">CysRS</shortName>
    </alternativeName>
</protein>
<organism>
    <name type="scientific">Streptomyces avermitilis (strain ATCC 31267 / DSM 46492 / JCM 5070 / NBRC 14893 / NCIMB 12804 / NRRL 8165 / MA-4680)</name>
    <dbReference type="NCBI Taxonomy" id="227882"/>
    <lineage>
        <taxon>Bacteria</taxon>
        <taxon>Bacillati</taxon>
        <taxon>Actinomycetota</taxon>
        <taxon>Actinomycetes</taxon>
        <taxon>Kitasatosporales</taxon>
        <taxon>Streptomycetaceae</taxon>
        <taxon>Streptomyces</taxon>
    </lineage>
</organism>
<evidence type="ECO:0000255" key="1">
    <source>
        <dbReference type="HAMAP-Rule" id="MF_00041"/>
    </source>
</evidence>
<comment type="catalytic activity">
    <reaction evidence="1">
        <text>tRNA(Cys) + L-cysteine + ATP = L-cysteinyl-tRNA(Cys) + AMP + diphosphate</text>
        <dbReference type="Rhea" id="RHEA:17773"/>
        <dbReference type="Rhea" id="RHEA-COMP:9661"/>
        <dbReference type="Rhea" id="RHEA-COMP:9679"/>
        <dbReference type="ChEBI" id="CHEBI:30616"/>
        <dbReference type="ChEBI" id="CHEBI:33019"/>
        <dbReference type="ChEBI" id="CHEBI:35235"/>
        <dbReference type="ChEBI" id="CHEBI:78442"/>
        <dbReference type="ChEBI" id="CHEBI:78517"/>
        <dbReference type="ChEBI" id="CHEBI:456215"/>
        <dbReference type="EC" id="6.1.1.16"/>
    </reaction>
</comment>
<comment type="cofactor">
    <cofactor evidence="1">
        <name>Zn(2+)</name>
        <dbReference type="ChEBI" id="CHEBI:29105"/>
    </cofactor>
    <text evidence="1">Binds 1 zinc ion per subunit.</text>
</comment>
<comment type="subunit">
    <text evidence="1">Monomer.</text>
</comment>
<comment type="subcellular location">
    <subcellularLocation>
        <location evidence="1">Cytoplasm</location>
    </subcellularLocation>
</comment>
<comment type="similarity">
    <text evidence="1">Belongs to the class-I aminoacyl-tRNA synthetase family.</text>
</comment>
<accession>Q82GD0</accession>
<dbReference type="EC" id="6.1.1.16" evidence="1"/>
<dbReference type="EMBL" id="BA000030">
    <property type="protein sequence ID" value="BAC71679.1"/>
    <property type="molecule type" value="Genomic_DNA"/>
</dbReference>
<dbReference type="RefSeq" id="WP_010985397.1">
    <property type="nucleotide sequence ID" value="NZ_JZJK01000060.1"/>
</dbReference>
<dbReference type="SMR" id="Q82GD0"/>
<dbReference type="GeneID" id="41541036"/>
<dbReference type="KEGG" id="sma:SAVERM_3967"/>
<dbReference type="eggNOG" id="COG0215">
    <property type="taxonomic scope" value="Bacteria"/>
</dbReference>
<dbReference type="HOGENOM" id="CLU_013528_0_1_11"/>
<dbReference type="OrthoDB" id="9815130at2"/>
<dbReference type="Proteomes" id="UP000000428">
    <property type="component" value="Chromosome"/>
</dbReference>
<dbReference type="GO" id="GO:0005829">
    <property type="term" value="C:cytosol"/>
    <property type="evidence" value="ECO:0007669"/>
    <property type="project" value="TreeGrafter"/>
</dbReference>
<dbReference type="GO" id="GO:0005524">
    <property type="term" value="F:ATP binding"/>
    <property type="evidence" value="ECO:0007669"/>
    <property type="project" value="UniProtKB-UniRule"/>
</dbReference>
<dbReference type="GO" id="GO:0004817">
    <property type="term" value="F:cysteine-tRNA ligase activity"/>
    <property type="evidence" value="ECO:0007669"/>
    <property type="project" value="UniProtKB-UniRule"/>
</dbReference>
<dbReference type="GO" id="GO:0008270">
    <property type="term" value="F:zinc ion binding"/>
    <property type="evidence" value="ECO:0007669"/>
    <property type="project" value="UniProtKB-UniRule"/>
</dbReference>
<dbReference type="GO" id="GO:0006423">
    <property type="term" value="P:cysteinyl-tRNA aminoacylation"/>
    <property type="evidence" value="ECO:0007669"/>
    <property type="project" value="UniProtKB-UniRule"/>
</dbReference>
<dbReference type="CDD" id="cd00672">
    <property type="entry name" value="CysRS_core"/>
    <property type="match status" value="1"/>
</dbReference>
<dbReference type="FunFam" id="3.40.50.620:FF:000068">
    <property type="entry name" value="Cysteine--tRNA ligase"/>
    <property type="match status" value="1"/>
</dbReference>
<dbReference type="Gene3D" id="1.20.120.1910">
    <property type="entry name" value="Cysteine-tRNA ligase, C-terminal anti-codon recognition domain"/>
    <property type="match status" value="1"/>
</dbReference>
<dbReference type="Gene3D" id="3.40.50.620">
    <property type="entry name" value="HUPs"/>
    <property type="match status" value="1"/>
</dbReference>
<dbReference type="HAMAP" id="MF_00041">
    <property type="entry name" value="Cys_tRNA_synth"/>
    <property type="match status" value="1"/>
</dbReference>
<dbReference type="InterPro" id="IPR015803">
    <property type="entry name" value="Cys-tRNA-ligase"/>
</dbReference>
<dbReference type="InterPro" id="IPR015273">
    <property type="entry name" value="Cys-tRNA-synt_Ia_DALR"/>
</dbReference>
<dbReference type="InterPro" id="IPR024909">
    <property type="entry name" value="Cys-tRNA/MSH_ligase"/>
</dbReference>
<dbReference type="InterPro" id="IPR056411">
    <property type="entry name" value="CysS_C"/>
</dbReference>
<dbReference type="InterPro" id="IPR014729">
    <property type="entry name" value="Rossmann-like_a/b/a_fold"/>
</dbReference>
<dbReference type="InterPro" id="IPR032678">
    <property type="entry name" value="tRNA-synt_1_cat_dom"/>
</dbReference>
<dbReference type="InterPro" id="IPR009080">
    <property type="entry name" value="tRNAsynth_Ia_anticodon-bd"/>
</dbReference>
<dbReference type="NCBIfam" id="TIGR00435">
    <property type="entry name" value="cysS"/>
    <property type="match status" value="1"/>
</dbReference>
<dbReference type="PANTHER" id="PTHR10890:SF30">
    <property type="entry name" value="CYSTEINE--TRNA LIGASE"/>
    <property type="match status" value="1"/>
</dbReference>
<dbReference type="PANTHER" id="PTHR10890">
    <property type="entry name" value="CYSTEINYL-TRNA SYNTHETASE"/>
    <property type="match status" value="1"/>
</dbReference>
<dbReference type="Pfam" id="PF23493">
    <property type="entry name" value="CysS_C"/>
    <property type="match status" value="1"/>
</dbReference>
<dbReference type="Pfam" id="PF09190">
    <property type="entry name" value="DALR_2"/>
    <property type="match status" value="1"/>
</dbReference>
<dbReference type="Pfam" id="PF01406">
    <property type="entry name" value="tRNA-synt_1e"/>
    <property type="match status" value="1"/>
</dbReference>
<dbReference type="PRINTS" id="PR00983">
    <property type="entry name" value="TRNASYNTHCYS"/>
</dbReference>
<dbReference type="SMART" id="SM00840">
    <property type="entry name" value="DALR_2"/>
    <property type="match status" value="1"/>
</dbReference>
<dbReference type="SUPFAM" id="SSF47323">
    <property type="entry name" value="Anticodon-binding domain of a subclass of class I aminoacyl-tRNA synthetases"/>
    <property type="match status" value="1"/>
</dbReference>
<dbReference type="SUPFAM" id="SSF52374">
    <property type="entry name" value="Nucleotidylyl transferase"/>
    <property type="match status" value="1"/>
</dbReference>
<reference key="1">
    <citation type="journal article" date="2001" name="Proc. Natl. Acad. Sci. U.S.A.">
        <title>Genome sequence of an industrial microorganism Streptomyces avermitilis: deducing the ability of producing secondary metabolites.</title>
        <authorList>
            <person name="Omura S."/>
            <person name="Ikeda H."/>
            <person name="Ishikawa J."/>
            <person name="Hanamoto A."/>
            <person name="Takahashi C."/>
            <person name="Shinose M."/>
            <person name="Takahashi Y."/>
            <person name="Horikawa H."/>
            <person name="Nakazawa H."/>
            <person name="Osonoe T."/>
            <person name="Kikuchi H."/>
            <person name="Shiba T."/>
            <person name="Sakaki Y."/>
            <person name="Hattori M."/>
        </authorList>
    </citation>
    <scope>NUCLEOTIDE SEQUENCE [LARGE SCALE GENOMIC DNA]</scope>
    <source>
        <strain>ATCC 31267 / DSM 46492 / JCM 5070 / NBRC 14893 / NCIMB 12804 / NRRL 8165 / MA-4680</strain>
    </source>
</reference>
<reference key="2">
    <citation type="journal article" date="2003" name="Nat. Biotechnol.">
        <title>Complete genome sequence and comparative analysis of the industrial microorganism Streptomyces avermitilis.</title>
        <authorList>
            <person name="Ikeda H."/>
            <person name="Ishikawa J."/>
            <person name="Hanamoto A."/>
            <person name="Shinose M."/>
            <person name="Kikuchi H."/>
            <person name="Shiba T."/>
            <person name="Sakaki Y."/>
            <person name="Hattori M."/>
            <person name="Omura S."/>
        </authorList>
    </citation>
    <scope>NUCLEOTIDE SEQUENCE [LARGE SCALE GENOMIC DNA]</scope>
    <source>
        <strain>ATCC 31267 / DSM 46492 / JCM 5070 / NBRC 14893 / NCIMB 12804 / NRRL 8165 / MA-4680</strain>
    </source>
</reference>
<keyword id="KW-0030">Aminoacyl-tRNA synthetase</keyword>
<keyword id="KW-0067">ATP-binding</keyword>
<keyword id="KW-0963">Cytoplasm</keyword>
<keyword id="KW-0436">Ligase</keyword>
<keyword id="KW-0479">Metal-binding</keyword>
<keyword id="KW-0547">Nucleotide-binding</keyword>
<keyword id="KW-0648">Protein biosynthesis</keyword>
<keyword id="KW-1185">Reference proteome</keyword>
<keyword id="KW-0862">Zinc</keyword>